<evidence type="ECO:0000255" key="1"/>
<evidence type="ECO:0000305" key="2"/>
<protein>
    <recommendedName>
        <fullName>Uncharacterized protein MJ1333.1</fullName>
    </recommendedName>
</protein>
<dbReference type="EMBL" id="L77117">
    <property type="protein sequence ID" value="AAB99347.1"/>
    <property type="molecule type" value="Genomic_DNA"/>
</dbReference>
<dbReference type="RefSeq" id="WP_010870851.1">
    <property type="nucleotide sequence ID" value="NC_000909.1"/>
</dbReference>
<dbReference type="SMR" id="P81327"/>
<dbReference type="STRING" id="243232.MJ_1333.1"/>
<dbReference type="PaxDb" id="243232-MJ_1333.1"/>
<dbReference type="EnsemblBacteria" id="AAB99347">
    <property type="protein sequence ID" value="AAB99347"/>
    <property type="gene ID" value="MJ_1333.1"/>
</dbReference>
<dbReference type="GeneID" id="1452236"/>
<dbReference type="KEGG" id="mja:MJ_1333.1"/>
<dbReference type="eggNOG" id="arCOG03426">
    <property type="taxonomic scope" value="Archaea"/>
</dbReference>
<dbReference type="HOGENOM" id="CLU_1870747_0_0_2"/>
<dbReference type="InParanoid" id="P81327"/>
<dbReference type="OrthoDB" id="65843at2157"/>
<dbReference type="Proteomes" id="UP000000805">
    <property type="component" value="Chromosome"/>
</dbReference>
<dbReference type="GO" id="GO:0005886">
    <property type="term" value="C:plasma membrane"/>
    <property type="evidence" value="ECO:0007669"/>
    <property type="project" value="UniProtKB-SubCell"/>
</dbReference>
<dbReference type="Gene3D" id="1.10.3730.20">
    <property type="match status" value="1"/>
</dbReference>
<dbReference type="InterPro" id="IPR000620">
    <property type="entry name" value="EamA_dom"/>
</dbReference>
<dbReference type="PANTHER" id="PTHR22911">
    <property type="entry name" value="ACYL-MALONYL CONDENSING ENZYME-RELATED"/>
    <property type="match status" value="1"/>
</dbReference>
<dbReference type="PANTHER" id="PTHR22911:SF137">
    <property type="entry name" value="SOLUTE CARRIER FAMILY 35 MEMBER G2-RELATED"/>
    <property type="match status" value="1"/>
</dbReference>
<dbReference type="Pfam" id="PF00892">
    <property type="entry name" value="EamA"/>
    <property type="match status" value="1"/>
</dbReference>
<dbReference type="SUPFAM" id="SSF103481">
    <property type="entry name" value="Multidrug resistance efflux transporter EmrE"/>
    <property type="match status" value="1"/>
</dbReference>
<name>YD3A_METJA</name>
<accession>P81327</accession>
<reference key="1">
    <citation type="journal article" date="1996" name="Science">
        <title>Complete genome sequence of the methanogenic archaeon, Methanococcus jannaschii.</title>
        <authorList>
            <person name="Bult C.J."/>
            <person name="White O."/>
            <person name="Olsen G.J."/>
            <person name="Zhou L."/>
            <person name="Fleischmann R.D."/>
            <person name="Sutton G.G."/>
            <person name="Blake J.A."/>
            <person name="FitzGerald L.M."/>
            <person name="Clayton R.A."/>
            <person name="Gocayne J.D."/>
            <person name="Kerlavage A.R."/>
            <person name="Dougherty B.A."/>
            <person name="Tomb J.-F."/>
            <person name="Adams M.D."/>
            <person name="Reich C.I."/>
            <person name="Overbeek R."/>
            <person name="Kirkness E.F."/>
            <person name="Weinstock K.G."/>
            <person name="Merrick J.M."/>
            <person name="Glodek A."/>
            <person name="Scott J.L."/>
            <person name="Geoghagen N.S.M."/>
            <person name="Weidman J.F."/>
            <person name="Fuhrmann J.L."/>
            <person name="Nguyen D."/>
            <person name="Utterback T.R."/>
            <person name="Kelley J.M."/>
            <person name="Peterson J.D."/>
            <person name="Sadow P.W."/>
            <person name="Hanna M.C."/>
            <person name="Cotton M.D."/>
            <person name="Roberts K.M."/>
            <person name="Hurst M.A."/>
            <person name="Kaine B.P."/>
            <person name="Borodovsky M."/>
            <person name="Klenk H.-P."/>
            <person name="Fraser C.M."/>
            <person name="Smith H.O."/>
            <person name="Woese C.R."/>
            <person name="Venter J.C."/>
        </authorList>
    </citation>
    <scope>NUCLEOTIDE SEQUENCE [LARGE SCALE GENOMIC DNA]</scope>
    <source>
        <strain>ATCC 43067 / DSM 2661 / JAL-1 / JCM 10045 / NBRC 100440</strain>
    </source>
</reference>
<comment type="subcellular location">
    <subcellularLocation>
        <location evidence="2">Cell membrane</location>
        <topology evidence="2">Multi-pass membrane protein</topology>
    </subcellularLocation>
</comment>
<organism>
    <name type="scientific">Methanocaldococcus jannaschii (strain ATCC 43067 / DSM 2661 / JAL-1 / JCM 10045 / NBRC 100440)</name>
    <name type="common">Methanococcus jannaschii</name>
    <dbReference type="NCBI Taxonomy" id="243232"/>
    <lineage>
        <taxon>Archaea</taxon>
        <taxon>Methanobacteriati</taxon>
        <taxon>Methanobacteriota</taxon>
        <taxon>Methanomada group</taxon>
        <taxon>Methanococci</taxon>
        <taxon>Methanococcales</taxon>
        <taxon>Methanocaldococcaceae</taxon>
        <taxon>Methanocaldococcus</taxon>
    </lineage>
</organism>
<proteinExistence type="predicted"/>
<sequence>MDTAIILGLLVAVFYGVGTFFAKIVCEKNPLFQWIVVNIVGIILCLIILLKYKNIIITDQKILTYAIISAVLVVIGSLLLYYALYKGKASIVVPLSSIGPAITVALSILFLKETLTLPQMIGIVLIIIGIILLSISN</sequence>
<gene>
    <name type="ordered locus">MJ1333.1</name>
</gene>
<feature type="chain" id="PRO_0000107279" description="Uncharacterized protein MJ1333.1">
    <location>
        <begin position="1"/>
        <end position="137"/>
    </location>
</feature>
<feature type="transmembrane region" description="Helical" evidence="1">
    <location>
        <begin position="4"/>
        <end position="26"/>
    </location>
</feature>
<feature type="transmembrane region" description="Helical" evidence="1">
    <location>
        <begin position="35"/>
        <end position="57"/>
    </location>
</feature>
<feature type="transmembrane region" description="Helical" evidence="1">
    <location>
        <begin position="62"/>
        <end position="84"/>
    </location>
</feature>
<feature type="transmembrane region" description="Helical" evidence="1">
    <location>
        <begin position="89"/>
        <end position="111"/>
    </location>
</feature>
<feature type="transmembrane region" description="Helical" evidence="1">
    <location>
        <begin position="116"/>
        <end position="135"/>
    </location>
</feature>
<feature type="domain" description="EamA">
    <location>
        <begin position="13"/>
        <end position="135"/>
    </location>
</feature>
<keyword id="KW-1003">Cell membrane</keyword>
<keyword id="KW-0472">Membrane</keyword>
<keyword id="KW-1185">Reference proteome</keyword>
<keyword id="KW-0812">Transmembrane</keyword>
<keyword id="KW-1133">Transmembrane helix</keyword>